<accession>B6JGH9</accession>
<accession>F8BXM4</accession>
<organism>
    <name type="scientific">Afipia carboxidovorans (strain ATCC 49405 / DSM 1227 / KCTC 32145 / OM5)</name>
    <name type="common">Oligotropha carboxidovorans</name>
    <dbReference type="NCBI Taxonomy" id="504832"/>
    <lineage>
        <taxon>Bacteria</taxon>
        <taxon>Pseudomonadati</taxon>
        <taxon>Pseudomonadota</taxon>
        <taxon>Alphaproteobacteria</taxon>
        <taxon>Hyphomicrobiales</taxon>
        <taxon>Nitrobacteraceae</taxon>
        <taxon>Afipia</taxon>
    </lineage>
</organism>
<gene>
    <name evidence="1" type="primary">glyA</name>
    <name type="ordered locus">OCA5_c21580</name>
    <name type="ordered locus">OCAR_5860</name>
</gene>
<comment type="function">
    <text evidence="1">Catalyzes the reversible interconversion of serine and glycine with tetrahydrofolate (THF) serving as the one-carbon carrier. This reaction serves as the major source of one-carbon groups required for the biosynthesis of purines, thymidylate, methionine, and other important biomolecules. Also exhibits THF-independent aldolase activity toward beta-hydroxyamino acids, producing glycine and aldehydes, via a retro-aldol mechanism.</text>
</comment>
<comment type="catalytic activity">
    <reaction evidence="1">
        <text>(6R)-5,10-methylene-5,6,7,8-tetrahydrofolate + glycine + H2O = (6S)-5,6,7,8-tetrahydrofolate + L-serine</text>
        <dbReference type="Rhea" id="RHEA:15481"/>
        <dbReference type="ChEBI" id="CHEBI:15377"/>
        <dbReference type="ChEBI" id="CHEBI:15636"/>
        <dbReference type="ChEBI" id="CHEBI:33384"/>
        <dbReference type="ChEBI" id="CHEBI:57305"/>
        <dbReference type="ChEBI" id="CHEBI:57453"/>
        <dbReference type="EC" id="2.1.2.1"/>
    </reaction>
</comment>
<comment type="cofactor">
    <cofactor evidence="1">
        <name>pyridoxal 5'-phosphate</name>
        <dbReference type="ChEBI" id="CHEBI:597326"/>
    </cofactor>
</comment>
<comment type="pathway">
    <text evidence="1">One-carbon metabolism; tetrahydrofolate interconversion.</text>
</comment>
<comment type="pathway">
    <text evidence="1">Amino-acid biosynthesis; glycine biosynthesis; glycine from L-serine: step 1/1.</text>
</comment>
<comment type="subunit">
    <text evidence="1">Homodimer.</text>
</comment>
<comment type="subcellular location">
    <subcellularLocation>
        <location evidence="1">Cytoplasm</location>
    </subcellularLocation>
</comment>
<comment type="similarity">
    <text evidence="1">Belongs to the SHMT family.</text>
</comment>
<evidence type="ECO:0000255" key="1">
    <source>
        <dbReference type="HAMAP-Rule" id="MF_00051"/>
    </source>
</evidence>
<name>GLYA_AFIC5</name>
<protein>
    <recommendedName>
        <fullName evidence="1">Serine hydroxymethyltransferase</fullName>
        <shortName evidence="1">SHMT</shortName>
        <shortName evidence="1">Serine methylase</shortName>
        <ecNumber evidence="1">2.1.2.1</ecNumber>
    </recommendedName>
</protein>
<feature type="chain" id="PRO_0000369941" description="Serine hydroxymethyltransferase">
    <location>
        <begin position="1"/>
        <end position="433"/>
    </location>
</feature>
<feature type="binding site" evidence="1">
    <location>
        <position position="132"/>
    </location>
    <ligand>
        <name>(6S)-5,6,7,8-tetrahydrofolate</name>
        <dbReference type="ChEBI" id="CHEBI:57453"/>
    </ligand>
</feature>
<feature type="binding site" evidence="1">
    <location>
        <begin position="136"/>
        <end position="138"/>
    </location>
    <ligand>
        <name>(6S)-5,6,7,8-tetrahydrofolate</name>
        <dbReference type="ChEBI" id="CHEBI:57453"/>
    </ligand>
</feature>
<feature type="site" description="Plays an important role in substrate specificity" evidence="1">
    <location>
        <position position="240"/>
    </location>
</feature>
<feature type="modified residue" description="N6-(pyridoxal phosphate)lysine" evidence="1">
    <location>
        <position position="241"/>
    </location>
</feature>
<reference key="1">
    <citation type="journal article" date="2008" name="J. Bacteriol.">
        <title>Genome sequence of the chemolithoautotrophic bacterium Oligotropha carboxidovorans OM5T.</title>
        <authorList>
            <person name="Paul D."/>
            <person name="Bridges S."/>
            <person name="Burgess S.C."/>
            <person name="Dandass Y."/>
            <person name="Lawrence M.L."/>
        </authorList>
    </citation>
    <scope>NUCLEOTIDE SEQUENCE [LARGE SCALE GENOMIC DNA]</scope>
    <source>
        <strain>ATCC 49405 / DSM 1227 / KCTC 32145 / OM5</strain>
    </source>
</reference>
<reference key="2">
    <citation type="journal article" date="2011" name="J. Bacteriol.">
        <title>Complete genome sequences of the chemolithoautotrophic Oligotropha carboxidovorans strains OM4 and OM5.</title>
        <authorList>
            <person name="Volland S."/>
            <person name="Rachinger M."/>
            <person name="Strittmatter A."/>
            <person name="Daniel R."/>
            <person name="Gottschalk G."/>
            <person name="Meyer O."/>
        </authorList>
    </citation>
    <scope>NUCLEOTIDE SEQUENCE [LARGE SCALE GENOMIC DNA]</scope>
    <source>
        <strain>ATCC 49405 / DSM 1227 / KCTC 32145 / OM5</strain>
    </source>
</reference>
<proteinExistence type="inferred from homology"/>
<keyword id="KW-0028">Amino-acid biosynthesis</keyword>
<keyword id="KW-0963">Cytoplasm</keyword>
<keyword id="KW-0554">One-carbon metabolism</keyword>
<keyword id="KW-0663">Pyridoxal phosphate</keyword>
<keyword id="KW-1185">Reference proteome</keyword>
<keyword id="KW-0808">Transferase</keyword>
<sequence length="433" mass="46436">MPSSAQNASTPNTFFTASLAAADPEIADAIKGELGRQQHEIELIASENIVSRAVLEAQGSVMTNKYAEGYPGKRYYGGCEWVDVAETLAIERAKKLFGAQFANVQPNSGSQMNQAVFLALLQPGDTFMGLDLAAGGHLTHGSPVNMSGKWFKAAHYTVRRDDQLIDMDEVAKQAEQVKPKLIIAGGSAYSRPWDFKRFREIADSVGAYFMVDMAHFAGLVAGGVHASPVPHAHVTTTTTHKSLRGPRGGLILTNDEDIAKKINSAIFPGLQGGPLMHVIAAKAVAFKEALQPDFKVYAKNIVENARALAETLRGHGFEIVSGGTDNHLMLVDLRPKGLKGNISERALVRSGLTCNKNGIPFDPEKPFVTSGLRLGTPATTTRGFGVAEFKQVGALIAEVLNAVAQSPDGAAPGVEESVKKRVRELTDRFPIYS</sequence>
<dbReference type="EC" id="2.1.2.1" evidence="1"/>
<dbReference type="EMBL" id="CP001196">
    <property type="protein sequence ID" value="ACI92985.1"/>
    <property type="molecule type" value="Genomic_DNA"/>
</dbReference>
<dbReference type="EMBL" id="CP002826">
    <property type="protein sequence ID" value="AEI06861.1"/>
    <property type="molecule type" value="Genomic_DNA"/>
</dbReference>
<dbReference type="RefSeq" id="WP_012563012.1">
    <property type="nucleotide sequence ID" value="NC_015684.1"/>
</dbReference>
<dbReference type="SMR" id="B6JGH9"/>
<dbReference type="STRING" id="504832.OCA5_c21580"/>
<dbReference type="KEGG" id="oca:OCAR_5860"/>
<dbReference type="KEGG" id="ocg:OCA5_c21580"/>
<dbReference type="PATRIC" id="fig|504832.7.peg.2279"/>
<dbReference type="eggNOG" id="COG0112">
    <property type="taxonomic scope" value="Bacteria"/>
</dbReference>
<dbReference type="HOGENOM" id="CLU_022477_2_0_5"/>
<dbReference type="OrthoDB" id="9803846at2"/>
<dbReference type="UniPathway" id="UPA00193"/>
<dbReference type="UniPathway" id="UPA00288">
    <property type="reaction ID" value="UER01023"/>
</dbReference>
<dbReference type="Proteomes" id="UP000007730">
    <property type="component" value="Chromosome"/>
</dbReference>
<dbReference type="GO" id="GO:0005829">
    <property type="term" value="C:cytosol"/>
    <property type="evidence" value="ECO:0007669"/>
    <property type="project" value="TreeGrafter"/>
</dbReference>
<dbReference type="GO" id="GO:0004372">
    <property type="term" value="F:glycine hydroxymethyltransferase activity"/>
    <property type="evidence" value="ECO:0007669"/>
    <property type="project" value="UniProtKB-UniRule"/>
</dbReference>
<dbReference type="GO" id="GO:0030170">
    <property type="term" value="F:pyridoxal phosphate binding"/>
    <property type="evidence" value="ECO:0007669"/>
    <property type="project" value="UniProtKB-UniRule"/>
</dbReference>
<dbReference type="GO" id="GO:0019264">
    <property type="term" value="P:glycine biosynthetic process from serine"/>
    <property type="evidence" value="ECO:0007669"/>
    <property type="project" value="UniProtKB-UniRule"/>
</dbReference>
<dbReference type="GO" id="GO:0035999">
    <property type="term" value="P:tetrahydrofolate interconversion"/>
    <property type="evidence" value="ECO:0007669"/>
    <property type="project" value="UniProtKB-UniRule"/>
</dbReference>
<dbReference type="CDD" id="cd00378">
    <property type="entry name" value="SHMT"/>
    <property type="match status" value="1"/>
</dbReference>
<dbReference type="FunFam" id="3.40.640.10:FF:000001">
    <property type="entry name" value="Serine hydroxymethyltransferase"/>
    <property type="match status" value="1"/>
</dbReference>
<dbReference type="Gene3D" id="3.90.1150.10">
    <property type="entry name" value="Aspartate Aminotransferase, domain 1"/>
    <property type="match status" value="1"/>
</dbReference>
<dbReference type="Gene3D" id="3.40.640.10">
    <property type="entry name" value="Type I PLP-dependent aspartate aminotransferase-like (Major domain)"/>
    <property type="match status" value="1"/>
</dbReference>
<dbReference type="HAMAP" id="MF_00051">
    <property type="entry name" value="SHMT"/>
    <property type="match status" value="1"/>
</dbReference>
<dbReference type="InterPro" id="IPR015424">
    <property type="entry name" value="PyrdxlP-dep_Trfase"/>
</dbReference>
<dbReference type="InterPro" id="IPR015421">
    <property type="entry name" value="PyrdxlP-dep_Trfase_major"/>
</dbReference>
<dbReference type="InterPro" id="IPR015422">
    <property type="entry name" value="PyrdxlP-dep_Trfase_small"/>
</dbReference>
<dbReference type="InterPro" id="IPR001085">
    <property type="entry name" value="Ser_HO-MeTrfase"/>
</dbReference>
<dbReference type="InterPro" id="IPR049943">
    <property type="entry name" value="Ser_HO-MeTrfase-like"/>
</dbReference>
<dbReference type="InterPro" id="IPR019798">
    <property type="entry name" value="Ser_HO-MeTrfase_PLP_BS"/>
</dbReference>
<dbReference type="InterPro" id="IPR039429">
    <property type="entry name" value="SHMT-like_dom"/>
</dbReference>
<dbReference type="NCBIfam" id="NF000586">
    <property type="entry name" value="PRK00011.1"/>
    <property type="match status" value="1"/>
</dbReference>
<dbReference type="PANTHER" id="PTHR11680">
    <property type="entry name" value="SERINE HYDROXYMETHYLTRANSFERASE"/>
    <property type="match status" value="1"/>
</dbReference>
<dbReference type="PANTHER" id="PTHR11680:SF35">
    <property type="entry name" value="SERINE HYDROXYMETHYLTRANSFERASE 1"/>
    <property type="match status" value="1"/>
</dbReference>
<dbReference type="Pfam" id="PF00464">
    <property type="entry name" value="SHMT"/>
    <property type="match status" value="1"/>
</dbReference>
<dbReference type="PIRSF" id="PIRSF000412">
    <property type="entry name" value="SHMT"/>
    <property type="match status" value="1"/>
</dbReference>
<dbReference type="SUPFAM" id="SSF53383">
    <property type="entry name" value="PLP-dependent transferases"/>
    <property type="match status" value="1"/>
</dbReference>
<dbReference type="PROSITE" id="PS00096">
    <property type="entry name" value="SHMT"/>
    <property type="match status" value="1"/>
</dbReference>